<keyword id="KW-0233">DNA recombination</keyword>
<keyword id="KW-0238">DNA-binding</keyword>
<keyword id="KW-0804">Transcription</keyword>
<keyword id="KW-0805">Transcription regulation</keyword>
<keyword id="KW-0810">Translation regulation</keyword>
<dbReference type="EMBL" id="U90958">
    <property type="protein sequence ID" value="AAG10095.1"/>
    <property type="molecule type" value="Genomic_DNA"/>
</dbReference>
<dbReference type="RefSeq" id="WP_002213349.1">
    <property type="nucleotide sequence ID" value="NZ_WHPL01000002.1"/>
</dbReference>
<dbReference type="SMR" id="P0A0U3"/>
<dbReference type="GO" id="GO:0005694">
    <property type="term" value="C:chromosome"/>
    <property type="evidence" value="ECO:0007669"/>
    <property type="project" value="InterPro"/>
</dbReference>
<dbReference type="GO" id="GO:0005829">
    <property type="term" value="C:cytosol"/>
    <property type="evidence" value="ECO:0007669"/>
    <property type="project" value="TreeGrafter"/>
</dbReference>
<dbReference type="GO" id="GO:0003677">
    <property type="term" value="F:DNA binding"/>
    <property type="evidence" value="ECO:0007669"/>
    <property type="project" value="UniProtKB-UniRule"/>
</dbReference>
<dbReference type="GO" id="GO:0030527">
    <property type="term" value="F:structural constituent of chromatin"/>
    <property type="evidence" value="ECO:0007669"/>
    <property type="project" value="InterPro"/>
</dbReference>
<dbReference type="GO" id="GO:0006310">
    <property type="term" value="P:DNA recombination"/>
    <property type="evidence" value="ECO:0007669"/>
    <property type="project" value="UniProtKB-UniRule"/>
</dbReference>
<dbReference type="GO" id="GO:0006355">
    <property type="term" value="P:regulation of DNA-templated transcription"/>
    <property type="evidence" value="ECO:0007669"/>
    <property type="project" value="UniProtKB-UniRule"/>
</dbReference>
<dbReference type="GO" id="GO:0006417">
    <property type="term" value="P:regulation of translation"/>
    <property type="evidence" value="ECO:0007669"/>
    <property type="project" value="UniProtKB-UniRule"/>
</dbReference>
<dbReference type="CDD" id="cd13836">
    <property type="entry name" value="IHF_B"/>
    <property type="match status" value="1"/>
</dbReference>
<dbReference type="FunFam" id="4.10.520.10:FF:000003">
    <property type="entry name" value="Integration host factor subunit beta"/>
    <property type="match status" value="1"/>
</dbReference>
<dbReference type="Gene3D" id="4.10.520.10">
    <property type="entry name" value="IHF-like DNA-binding proteins"/>
    <property type="match status" value="1"/>
</dbReference>
<dbReference type="HAMAP" id="MF_00381">
    <property type="entry name" value="IHF_beta"/>
    <property type="match status" value="1"/>
</dbReference>
<dbReference type="InterPro" id="IPR000119">
    <property type="entry name" value="Hist_DNA-bd"/>
</dbReference>
<dbReference type="InterPro" id="IPR020816">
    <property type="entry name" value="Histone-like_DNA-bd_CS"/>
</dbReference>
<dbReference type="InterPro" id="IPR010992">
    <property type="entry name" value="IHF-like_DNA-bd_dom_sf"/>
</dbReference>
<dbReference type="InterPro" id="IPR005685">
    <property type="entry name" value="IHF_beta"/>
</dbReference>
<dbReference type="NCBIfam" id="TIGR00988">
    <property type="entry name" value="hip"/>
    <property type="match status" value="1"/>
</dbReference>
<dbReference type="NCBIfam" id="NF001222">
    <property type="entry name" value="PRK00199.1"/>
    <property type="match status" value="1"/>
</dbReference>
<dbReference type="PANTHER" id="PTHR33175">
    <property type="entry name" value="DNA-BINDING PROTEIN HU"/>
    <property type="match status" value="1"/>
</dbReference>
<dbReference type="PANTHER" id="PTHR33175:SF5">
    <property type="entry name" value="INTEGRATION HOST FACTOR SUBUNIT BETA"/>
    <property type="match status" value="1"/>
</dbReference>
<dbReference type="Pfam" id="PF00216">
    <property type="entry name" value="Bac_DNA_binding"/>
    <property type="match status" value="1"/>
</dbReference>
<dbReference type="PRINTS" id="PR01727">
    <property type="entry name" value="DNABINDINGHU"/>
</dbReference>
<dbReference type="SMART" id="SM00411">
    <property type="entry name" value="BHL"/>
    <property type="match status" value="1"/>
</dbReference>
<dbReference type="SUPFAM" id="SSF47729">
    <property type="entry name" value="IHF-like DNA-binding proteins"/>
    <property type="match status" value="1"/>
</dbReference>
<dbReference type="PROSITE" id="PS00045">
    <property type="entry name" value="HISTONE_LIKE"/>
    <property type="match status" value="1"/>
</dbReference>
<accession>P0A0U3</accession>
<accession>Q9JRH3</accession>
<proteinExistence type="inferred from homology"/>
<name>IHFB_NEIGO</name>
<feature type="chain" id="PRO_0000105054" description="Integration host factor subunit beta">
    <location>
        <begin position="1"/>
        <end position="104"/>
    </location>
</feature>
<protein>
    <recommendedName>
        <fullName>Integration host factor subunit beta</fullName>
        <shortName>IHF-beta</shortName>
    </recommendedName>
</protein>
<reference key="1">
    <citation type="journal article" date="1998" name="Gene">
        <title>The ihf mRNA levels decline as Neisseria gonorrhoeae enters the stationary growth phase.</title>
        <authorList>
            <person name="Hill S.A."/>
            <person name="Belland R.J."/>
            <person name="Wilson J."/>
        </authorList>
    </citation>
    <scope>NUCLEOTIDE SEQUENCE [GENOMIC DNA]</scope>
    <source>
        <strain>MS11</strain>
    </source>
</reference>
<gene>
    <name type="primary">ihfB</name>
    <name type="synonym">himD</name>
    <name type="synonym">hip</name>
</gene>
<organism>
    <name type="scientific">Neisseria gonorrhoeae</name>
    <dbReference type="NCBI Taxonomy" id="485"/>
    <lineage>
        <taxon>Bacteria</taxon>
        <taxon>Pseudomonadati</taxon>
        <taxon>Pseudomonadota</taxon>
        <taxon>Betaproteobacteria</taxon>
        <taxon>Neisseriales</taxon>
        <taxon>Neisseriaceae</taxon>
        <taxon>Neisseria</taxon>
    </lineage>
</organism>
<comment type="function">
    <text evidence="1">This protein is one of the two subunits of integration host factor, a specific DNA-binding protein that functions in genetic recombination as well as in transcriptional and translational control.</text>
</comment>
<comment type="subunit">
    <text evidence="1">Heterodimer of an alpha and a beta chain.</text>
</comment>
<comment type="similarity">
    <text evidence="2">Belongs to the bacterial histone-like protein family.</text>
</comment>
<evidence type="ECO:0000250" key="1"/>
<evidence type="ECO:0000305" key="2"/>
<sequence>MTKSELMVRLAEVFAAKNGTHLLAKDVEYSVKVLVDTMTRSLARGQRIEIRGFGSFDLNHRPARIGRNPKTGERVEVPEKHVPHFKPGKELRERVDLALKENAN</sequence>